<proteinExistence type="inferred from homology"/>
<sequence length="520" mass="57375">MSQQVIIFDTTLRDGEQALQASLSVKEKLQIALALERMGVDIMEVGFPVSSPGDFESVRTIAQQVKNSRVCALARCVDKDIDVAAEALRIAEAFRIHVFLATSTLHIESKLKRSFDDVLAMAVHSVKRARNYTDDVEFSCEDAGRTPIDNLCRVVEAAITAGATTINIPDTVGYTTPYQFGGIITDLYERVPNIDKAIISVHCHDDLGMSVANSITAVQAGARQVEGTINGLGERAGNCSLEEVIMAIKVRHEMLGVHTNINHQEIYRTSQLVSKICNMPIPGNKAIVGSNAFAHSSGIHQDGVLKNRENYEIMTPESIGLKEVQLNLTSRSGRAAVKHRMEEMGYQDKDYNLDSLYDAFLKLADKKGQVFDYDLEALAFINKQQEEPEYYRLDYFSVQSGSSVMATASVKLVCGEEIKSEAATGNGPVDAVYQAINRITDYPIELVKYQLSAKGQGKDALGQVDIVVDHKGRRFHGVGLATDIVESSAKALVHVLNNIWRAHQVEKEKQRLQQNNQEMV</sequence>
<feature type="chain" id="PRO_1000149339" description="2-isopropylmalate synthase">
    <location>
        <begin position="1"/>
        <end position="520"/>
    </location>
</feature>
<feature type="domain" description="Pyruvate carboxyltransferase" evidence="1">
    <location>
        <begin position="5"/>
        <end position="267"/>
    </location>
</feature>
<feature type="region of interest" description="Regulatory domain" evidence="1">
    <location>
        <begin position="392"/>
        <end position="520"/>
    </location>
</feature>
<feature type="binding site" evidence="1">
    <location>
        <position position="14"/>
    </location>
    <ligand>
        <name>Mn(2+)</name>
        <dbReference type="ChEBI" id="CHEBI:29035"/>
    </ligand>
</feature>
<feature type="binding site" evidence="1">
    <location>
        <position position="202"/>
    </location>
    <ligand>
        <name>Mn(2+)</name>
        <dbReference type="ChEBI" id="CHEBI:29035"/>
    </ligand>
</feature>
<feature type="binding site" evidence="1">
    <location>
        <position position="204"/>
    </location>
    <ligand>
        <name>Mn(2+)</name>
        <dbReference type="ChEBI" id="CHEBI:29035"/>
    </ligand>
</feature>
<feature type="binding site" evidence="1">
    <location>
        <position position="238"/>
    </location>
    <ligand>
        <name>Mn(2+)</name>
        <dbReference type="ChEBI" id="CHEBI:29035"/>
    </ligand>
</feature>
<comment type="function">
    <text evidence="1">Catalyzes the condensation of the acetyl group of acetyl-CoA with 3-methyl-2-oxobutanoate (2-ketoisovalerate) to form 3-carboxy-3-hydroxy-4-methylpentanoate (2-isopropylmalate).</text>
</comment>
<comment type="catalytic activity">
    <reaction evidence="1">
        <text>3-methyl-2-oxobutanoate + acetyl-CoA + H2O = (2S)-2-isopropylmalate + CoA + H(+)</text>
        <dbReference type="Rhea" id="RHEA:21524"/>
        <dbReference type="ChEBI" id="CHEBI:1178"/>
        <dbReference type="ChEBI" id="CHEBI:11851"/>
        <dbReference type="ChEBI" id="CHEBI:15377"/>
        <dbReference type="ChEBI" id="CHEBI:15378"/>
        <dbReference type="ChEBI" id="CHEBI:57287"/>
        <dbReference type="ChEBI" id="CHEBI:57288"/>
        <dbReference type="EC" id="2.3.3.13"/>
    </reaction>
</comment>
<comment type="cofactor">
    <cofactor evidence="1">
        <name>Mn(2+)</name>
        <dbReference type="ChEBI" id="CHEBI:29035"/>
    </cofactor>
</comment>
<comment type="pathway">
    <text evidence="1">Amino-acid biosynthesis; L-leucine biosynthesis; L-leucine from 3-methyl-2-oxobutanoate: step 1/4.</text>
</comment>
<comment type="subunit">
    <text evidence="1">Homodimer.</text>
</comment>
<comment type="subcellular location">
    <subcellularLocation>
        <location evidence="1">Cytoplasm</location>
    </subcellularLocation>
</comment>
<comment type="similarity">
    <text evidence="1">Belongs to the alpha-IPM synthase/homocitrate synthase family. LeuA type 1 subfamily.</text>
</comment>
<protein>
    <recommendedName>
        <fullName evidence="1">2-isopropylmalate synthase</fullName>
        <ecNumber evidence="1">2.3.3.13</ecNumber>
    </recommendedName>
    <alternativeName>
        <fullName evidence="1">Alpha-IPM synthase</fullName>
    </alternativeName>
    <alternativeName>
        <fullName evidence="1">Alpha-isopropylmalate synthase</fullName>
    </alternativeName>
</protein>
<name>LEU1_YERP3</name>
<gene>
    <name evidence="1" type="primary">leuA</name>
    <name type="ordered locus">YpsIP31758_3405</name>
</gene>
<dbReference type="EC" id="2.3.3.13" evidence="1"/>
<dbReference type="EMBL" id="CP000720">
    <property type="protein sequence ID" value="ABS47530.1"/>
    <property type="molecule type" value="Genomic_DNA"/>
</dbReference>
<dbReference type="RefSeq" id="WP_002210453.1">
    <property type="nucleotide sequence ID" value="NC_009708.1"/>
</dbReference>
<dbReference type="SMR" id="A7FM84"/>
<dbReference type="GeneID" id="57974079"/>
<dbReference type="KEGG" id="ypi:YpsIP31758_3405"/>
<dbReference type="HOGENOM" id="CLU_022158_0_1_6"/>
<dbReference type="UniPathway" id="UPA00048">
    <property type="reaction ID" value="UER00070"/>
</dbReference>
<dbReference type="Proteomes" id="UP000002412">
    <property type="component" value="Chromosome"/>
</dbReference>
<dbReference type="GO" id="GO:0005829">
    <property type="term" value="C:cytosol"/>
    <property type="evidence" value="ECO:0007669"/>
    <property type="project" value="TreeGrafter"/>
</dbReference>
<dbReference type="GO" id="GO:0003852">
    <property type="term" value="F:2-isopropylmalate synthase activity"/>
    <property type="evidence" value="ECO:0007669"/>
    <property type="project" value="UniProtKB-UniRule"/>
</dbReference>
<dbReference type="GO" id="GO:0003985">
    <property type="term" value="F:acetyl-CoA C-acetyltransferase activity"/>
    <property type="evidence" value="ECO:0007669"/>
    <property type="project" value="UniProtKB-UniRule"/>
</dbReference>
<dbReference type="GO" id="GO:0030145">
    <property type="term" value="F:manganese ion binding"/>
    <property type="evidence" value="ECO:0007669"/>
    <property type="project" value="UniProtKB-UniRule"/>
</dbReference>
<dbReference type="GO" id="GO:0009098">
    <property type="term" value="P:L-leucine biosynthetic process"/>
    <property type="evidence" value="ECO:0007669"/>
    <property type="project" value="UniProtKB-UniRule"/>
</dbReference>
<dbReference type="CDD" id="cd07940">
    <property type="entry name" value="DRE_TIM_IPMS"/>
    <property type="match status" value="1"/>
</dbReference>
<dbReference type="FunFam" id="1.10.238.260:FF:000001">
    <property type="entry name" value="2-isopropylmalate synthase"/>
    <property type="match status" value="1"/>
</dbReference>
<dbReference type="FunFam" id="3.20.20.70:FF:000010">
    <property type="entry name" value="2-isopropylmalate synthase"/>
    <property type="match status" value="1"/>
</dbReference>
<dbReference type="FunFam" id="3.30.160.270:FF:000001">
    <property type="entry name" value="2-isopropylmalate synthase"/>
    <property type="match status" value="1"/>
</dbReference>
<dbReference type="Gene3D" id="1.10.238.260">
    <property type="match status" value="1"/>
</dbReference>
<dbReference type="Gene3D" id="3.30.160.270">
    <property type="match status" value="1"/>
</dbReference>
<dbReference type="Gene3D" id="3.20.20.70">
    <property type="entry name" value="Aldolase class I"/>
    <property type="match status" value="1"/>
</dbReference>
<dbReference type="HAMAP" id="MF_01025">
    <property type="entry name" value="LeuA_type1"/>
    <property type="match status" value="1"/>
</dbReference>
<dbReference type="InterPro" id="IPR050073">
    <property type="entry name" value="2-IPM_HCS-like"/>
</dbReference>
<dbReference type="InterPro" id="IPR013709">
    <property type="entry name" value="2-isopropylmalate_synth_dimer"/>
</dbReference>
<dbReference type="InterPro" id="IPR002034">
    <property type="entry name" value="AIPM/Hcit_synth_CS"/>
</dbReference>
<dbReference type="InterPro" id="IPR013785">
    <property type="entry name" value="Aldolase_TIM"/>
</dbReference>
<dbReference type="InterPro" id="IPR054691">
    <property type="entry name" value="LeuA/HCS_post-cat"/>
</dbReference>
<dbReference type="InterPro" id="IPR036230">
    <property type="entry name" value="LeuA_allosteric_dom_sf"/>
</dbReference>
<dbReference type="InterPro" id="IPR005671">
    <property type="entry name" value="LeuA_bact_synth"/>
</dbReference>
<dbReference type="InterPro" id="IPR000891">
    <property type="entry name" value="PYR_CT"/>
</dbReference>
<dbReference type="NCBIfam" id="TIGR00973">
    <property type="entry name" value="leuA_bact"/>
    <property type="match status" value="1"/>
</dbReference>
<dbReference type="NCBIfam" id="NF002084">
    <property type="entry name" value="PRK00915.1-1"/>
    <property type="match status" value="1"/>
</dbReference>
<dbReference type="NCBIfam" id="NF002086">
    <property type="entry name" value="PRK00915.1-3"/>
    <property type="match status" value="1"/>
</dbReference>
<dbReference type="PANTHER" id="PTHR10277:SF9">
    <property type="entry name" value="2-ISOPROPYLMALATE SYNTHASE 1, CHLOROPLASTIC-RELATED"/>
    <property type="match status" value="1"/>
</dbReference>
<dbReference type="PANTHER" id="PTHR10277">
    <property type="entry name" value="HOMOCITRATE SYNTHASE-RELATED"/>
    <property type="match status" value="1"/>
</dbReference>
<dbReference type="Pfam" id="PF22617">
    <property type="entry name" value="HCS_D2"/>
    <property type="match status" value="1"/>
</dbReference>
<dbReference type="Pfam" id="PF00682">
    <property type="entry name" value="HMGL-like"/>
    <property type="match status" value="1"/>
</dbReference>
<dbReference type="Pfam" id="PF08502">
    <property type="entry name" value="LeuA_dimer"/>
    <property type="match status" value="1"/>
</dbReference>
<dbReference type="SMART" id="SM00917">
    <property type="entry name" value="LeuA_dimer"/>
    <property type="match status" value="1"/>
</dbReference>
<dbReference type="SUPFAM" id="SSF110921">
    <property type="entry name" value="2-isopropylmalate synthase LeuA, allosteric (dimerisation) domain"/>
    <property type="match status" value="1"/>
</dbReference>
<dbReference type="SUPFAM" id="SSF51569">
    <property type="entry name" value="Aldolase"/>
    <property type="match status" value="1"/>
</dbReference>
<dbReference type="PROSITE" id="PS00815">
    <property type="entry name" value="AIPM_HOMOCIT_SYNTH_1"/>
    <property type="match status" value="1"/>
</dbReference>
<dbReference type="PROSITE" id="PS00816">
    <property type="entry name" value="AIPM_HOMOCIT_SYNTH_2"/>
    <property type="match status" value="1"/>
</dbReference>
<dbReference type="PROSITE" id="PS50991">
    <property type="entry name" value="PYR_CT"/>
    <property type="match status" value="1"/>
</dbReference>
<reference key="1">
    <citation type="journal article" date="2007" name="PLoS Genet.">
        <title>The complete genome sequence of Yersinia pseudotuberculosis IP31758, the causative agent of Far East scarlet-like fever.</title>
        <authorList>
            <person name="Eppinger M."/>
            <person name="Rosovitz M.J."/>
            <person name="Fricke W.F."/>
            <person name="Rasko D.A."/>
            <person name="Kokorina G."/>
            <person name="Fayolle C."/>
            <person name="Lindler L.E."/>
            <person name="Carniel E."/>
            <person name="Ravel J."/>
        </authorList>
    </citation>
    <scope>NUCLEOTIDE SEQUENCE [LARGE SCALE GENOMIC DNA]</scope>
    <source>
        <strain>IP 31758</strain>
    </source>
</reference>
<evidence type="ECO:0000255" key="1">
    <source>
        <dbReference type="HAMAP-Rule" id="MF_01025"/>
    </source>
</evidence>
<organism>
    <name type="scientific">Yersinia pseudotuberculosis serotype O:1b (strain IP 31758)</name>
    <dbReference type="NCBI Taxonomy" id="349747"/>
    <lineage>
        <taxon>Bacteria</taxon>
        <taxon>Pseudomonadati</taxon>
        <taxon>Pseudomonadota</taxon>
        <taxon>Gammaproteobacteria</taxon>
        <taxon>Enterobacterales</taxon>
        <taxon>Yersiniaceae</taxon>
        <taxon>Yersinia</taxon>
    </lineage>
</organism>
<accession>A7FM84</accession>
<keyword id="KW-0028">Amino-acid biosynthesis</keyword>
<keyword id="KW-0100">Branched-chain amino acid biosynthesis</keyword>
<keyword id="KW-0963">Cytoplasm</keyword>
<keyword id="KW-0432">Leucine biosynthesis</keyword>
<keyword id="KW-0464">Manganese</keyword>
<keyword id="KW-0479">Metal-binding</keyword>
<keyword id="KW-0808">Transferase</keyword>